<reference key="1">
    <citation type="journal article" date="2001" name="Lancet">
        <title>Whole genome sequencing of meticillin-resistant Staphylococcus aureus.</title>
        <authorList>
            <person name="Kuroda M."/>
            <person name="Ohta T."/>
            <person name="Uchiyama I."/>
            <person name="Baba T."/>
            <person name="Yuzawa H."/>
            <person name="Kobayashi I."/>
            <person name="Cui L."/>
            <person name="Oguchi A."/>
            <person name="Aoki K."/>
            <person name="Nagai Y."/>
            <person name="Lian J.-Q."/>
            <person name="Ito T."/>
            <person name="Kanamori M."/>
            <person name="Matsumaru H."/>
            <person name="Maruyama A."/>
            <person name="Murakami H."/>
            <person name="Hosoyama A."/>
            <person name="Mizutani-Ui Y."/>
            <person name="Takahashi N.K."/>
            <person name="Sawano T."/>
            <person name="Inoue R."/>
            <person name="Kaito C."/>
            <person name="Sekimizu K."/>
            <person name="Hirakawa H."/>
            <person name="Kuhara S."/>
            <person name="Goto S."/>
            <person name="Yabuzaki J."/>
            <person name="Kanehisa M."/>
            <person name="Yamashita A."/>
            <person name="Oshima K."/>
            <person name="Furuya K."/>
            <person name="Yoshino C."/>
            <person name="Shiba T."/>
            <person name="Hattori M."/>
            <person name="Ogasawara N."/>
            <person name="Hayashi H."/>
            <person name="Hiramatsu K."/>
        </authorList>
    </citation>
    <scope>NUCLEOTIDE SEQUENCE [LARGE SCALE GENOMIC DNA]</scope>
    <source>
        <strain>N315</strain>
    </source>
</reference>
<proteinExistence type="inferred from homology"/>
<accession>Q7A4F2</accession>
<organism>
    <name type="scientific">Staphylococcus aureus (strain N315)</name>
    <dbReference type="NCBI Taxonomy" id="158879"/>
    <lineage>
        <taxon>Bacteria</taxon>
        <taxon>Bacillati</taxon>
        <taxon>Bacillota</taxon>
        <taxon>Bacilli</taxon>
        <taxon>Bacillales</taxon>
        <taxon>Staphylococcaceae</taxon>
        <taxon>Staphylococcus</taxon>
    </lineage>
</organism>
<evidence type="ECO:0000250" key="1"/>
<evidence type="ECO:0000255" key="2"/>
<evidence type="ECO:0000256" key="3">
    <source>
        <dbReference type="SAM" id="MobiDB-lite"/>
    </source>
</evidence>
<evidence type="ECO:0000305" key="4"/>
<feature type="signal peptide" evidence="2">
    <location>
        <begin position="1"/>
        <end position="27"/>
    </location>
</feature>
<feature type="chain" id="PRO_0000320314" description="Probable transglycosylase SceD">
    <location>
        <begin position="28"/>
        <end position="231"/>
    </location>
</feature>
<feature type="region of interest" description="Disordered" evidence="3">
    <location>
        <begin position="93"/>
        <end position="152"/>
    </location>
</feature>
<feature type="compositionally biased region" description="Polar residues" evidence="3">
    <location>
        <begin position="93"/>
        <end position="116"/>
    </location>
</feature>
<feature type="compositionally biased region" description="Low complexity" evidence="3">
    <location>
        <begin position="119"/>
        <end position="137"/>
    </location>
</feature>
<feature type="compositionally biased region" description="Polar residues" evidence="3">
    <location>
        <begin position="138"/>
        <end position="152"/>
    </location>
</feature>
<keyword id="KW-0326">Glycosidase</keyword>
<keyword id="KW-0378">Hydrolase</keyword>
<keyword id="KW-0964">Secreted</keyword>
<keyword id="KW-0732">Signal</keyword>
<comment type="function">
    <text evidence="1">Is able to cleave peptidoglycan and affects clumping and separation of bacterial cells.</text>
</comment>
<comment type="subcellular location">
    <subcellularLocation>
        <location evidence="1">Secreted</location>
    </subcellularLocation>
</comment>
<comment type="induction">
    <text evidence="1">Positively regulated by sigma B factor.</text>
</comment>
<comment type="similarity">
    <text evidence="4">Belongs to the transglycosylase family. SceD subfamily.</text>
</comment>
<gene>
    <name type="primary">sceD</name>
    <name type="ordered locus">SA1898</name>
</gene>
<protein>
    <recommendedName>
        <fullName>Probable transglycosylase SceD</fullName>
        <ecNumber>3.2.-.-</ecNumber>
    </recommendedName>
</protein>
<dbReference type="EC" id="3.2.-.-"/>
<dbReference type="EMBL" id="BA000018">
    <property type="protein sequence ID" value="BAB43182.1"/>
    <property type="molecule type" value="Genomic_DNA"/>
</dbReference>
<dbReference type="PIR" id="E90002">
    <property type="entry name" value="E90002"/>
</dbReference>
<dbReference type="RefSeq" id="WP_000752005.1">
    <property type="nucleotide sequence ID" value="NC_002745.2"/>
</dbReference>
<dbReference type="SMR" id="Q7A4F2"/>
<dbReference type="CAZy" id="GH23">
    <property type="family name" value="Glycoside Hydrolase Family 23"/>
</dbReference>
<dbReference type="EnsemblBacteria" id="BAB43182">
    <property type="protein sequence ID" value="BAB43182"/>
    <property type="gene ID" value="BAB43182"/>
</dbReference>
<dbReference type="KEGG" id="sau:SA1898"/>
<dbReference type="HOGENOM" id="CLU_099865_0_0_9"/>
<dbReference type="GO" id="GO:0005576">
    <property type="term" value="C:extracellular region"/>
    <property type="evidence" value="ECO:0007669"/>
    <property type="project" value="UniProtKB-SubCell"/>
</dbReference>
<dbReference type="GO" id="GO:0016798">
    <property type="term" value="F:hydrolase activity, acting on glycosyl bonds"/>
    <property type="evidence" value="ECO:0007669"/>
    <property type="project" value="UniProtKB-KW"/>
</dbReference>
<dbReference type="CDD" id="cd13925">
    <property type="entry name" value="RPF"/>
    <property type="match status" value="1"/>
</dbReference>
<dbReference type="Gene3D" id="1.10.530.10">
    <property type="match status" value="1"/>
</dbReference>
<dbReference type="InterPro" id="IPR023346">
    <property type="entry name" value="Lysozyme-like_dom_sf"/>
</dbReference>
<dbReference type="InterPro" id="IPR010618">
    <property type="entry name" value="RPF"/>
</dbReference>
<dbReference type="Pfam" id="PF06737">
    <property type="entry name" value="Transglycosylas"/>
    <property type="match status" value="1"/>
</dbReference>
<dbReference type="SUPFAM" id="SSF53955">
    <property type="entry name" value="Lysozyme-like"/>
    <property type="match status" value="1"/>
</dbReference>
<sequence length="231" mass="24077">MKKTLLASSLAVGLGIVAGNAGHEAHASEADLNKASLAQMAQSNDQTLNQKPIEAGAYNYTFDYEGFTYHFESDGTHFAWNYHATGANGANMSAQAPATNNVEPSAVQANQVQSQEVEAPQNAQTQQPQASTSNNSQVTATPTESKASEGSSVNVNAHLKQIAQRESGGNIHAVNPTSGAAGKYQFLQSTWDSVAPAKYKGVSPANAPESVQDAAAVKLYNTGGAGHWVTA</sequence>
<name>SCED_STAAN</name>